<name>GRIFN_RAT</name>
<sequence length="144" mass="15839">MALQFEAFCAGGLAPGWSLTVQGHADAGEDKFEINFLTDAGDIAFHVKPRFSSATVVGNAFQGGRWGQEEVSSVFPLTLGEPFEVEVSADTEHFHIYAQEQKVLQFPHRHRPLATITRVRVLSDHQLAQVELAKRGLSWGDGGY</sequence>
<dbReference type="EMBL" id="AF082160">
    <property type="protein sequence ID" value="AAC71765.1"/>
    <property type="molecule type" value="mRNA"/>
</dbReference>
<dbReference type="RefSeq" id="NP_476535.1">
    <property type="nucleotide sequence ID" value="NM_057187.2"/>
</dbReference>
<dbReference type="SMR" id="O88644"/>
<dbReference type="BioGRID" id="250681">
    <property type="interactions" value="1"/>
</dbReference>
<dbReference type="FunCoup" id="O88644">
    <property type="interactions" value="7"/>
</dbReference>
<dbReference type="STRING" id="10116.ENSRNOP00000001686"/>
<dbReference type="iPTMnet" id="O88644"/>
<dbReference type="PhosphoSitePlus" id="O88644"/>
<dbReference type="PaxDb" id="10116-ENSRNOP00000001686"/>
<dbReference type="GeneID" id="117130"/>
<dbReference type="KEGG" id="rno:117130"/>
<dbReference type="AGR" id="RGD:71055"/>
<dbReference type="CTD" id="402635"/>
<dbReference type="RGD" id="71055">
    <property type="gene designation" value="Grifin"/>
</dbReference>
<dbReference type="eggNOG" id="KOG3587">
    <property type="taxonomic scope" value="Eukaryota"/>
</dbReference>
<dbReference type="InParanoid" id="O88644"/>
<dbReference type="OrthoDB" id="8181at9989"/>
<dbReference type="PhylomeDB" id="O88644"/>
<dbReference type="PRO" id="PR:O88644"/>
<dbReference type="Proteomes" id="UP000002494">
    <property type="component" value="Unplaced"/>
</dbReference>
<dbReference type="GO" id="GO:0030246">
    <property type="term" value="F:carbohydrate binding"/>
    <property type="evidence" value="ECO:0000318"/>
    <property type="project" value="GO_Central"/>
</dbReference>
<dbReference type="CDD" id="cd00070">
    <property type="entry name" value="GLECT"/>
    <property type="match status" value="1"/>
</dbReference>
<dbReference type="FunFam" id="2.60.120.200:FF:000021">
    <property type="entry name" value="Galectin"/>
    <property type="match status" value="1"/>
</dbReference>
<dbReference type="Gene3D" id="2.60.120.200">
    <property type="match status" value="1"/>
</dbReference>
<dbReference type="InterPro" id="IPR013320">
    <property type="entry name" value="ConA-like_dom_sf"/>
</dbReference>
<dbReference type="InterPro" id="IPR044156">
    <property type="entry name" value="Galectin-like"/>
</dbReference>
<dbReference type="InterPro" id="IPR001079">
    <property type="entry name" value="Galectin_CRD"/>
</dbReference>
<dbReference type="PANTHER" id="PTHR11346">
    <property type="entry name" value="GALECTIN"/>
    <property type="match status" value="1"/>
</dbReference>
<dbReference type="PANTHER" id="PTHR11346:SF21">
    <property type="entry name" value="GRIFIN"/>
    <property type="match status" value="1"/>
</dbReference>
<dbReference type="Pfam" id="PF00337">
    <property type="entry name" value="Gal-bind_lectin"/>
    <property type="match status" value="1"/>
</dbReference>
<dbReference type="SMART" id="SM00908">
    <property type="entry name" value="Gal-bind_lectin"/>
    <property type="match status" value="1"/>
</dbReference>
<dbReference type="SMART" id="SM00276">
    <property type="entry name" value="GLECT"/>
    <property type="match status" value="1"/>
</dbReference>
<dbReference type="SUPFAM" id="SSF49899">
    <property type="entry name" value="Concanavalin A-like lectins/glucanases"/>
    <property type="match status" value="1"/>
</dbReference>
<dbReference type="PROSITE" id="PS51304">
    <property type="entry name" value="GALECTIN"/>
    <property type="match status" value="1"/>
</dbReference>
<feature type="chain" id="PRO_0000315764" description="Grifin">
    <location>
        <begin position="1"/>
        <end position="144"/>
    </location>
</feature>
<feature type="domain" description="Galectin" evidence="1">
    <location>
        <begin position="5"/>
        <end position="133"/>
    </location>
</feature>
<feature type="modified residue" description="Phosphoserine" evidence="3">
    <location>
        <position position="138"/>
    </location>
</feature>
<gene>
    <name type="primary">Grifin</name>
</gene>
<protein>
    <recommendedName>
        <fullName>Grifin</fullName>
    </recommendedName>
    <alternativeName>
        <fullName>Galectin-related inter-fiber protein</fullName>
    </alternativeName>
</protein>
<reference key="1">
    <citation type="journal article" date="1998" name="J. Biol. Chem.">
        <title>GRIFIN, a novel lens-specific protein related to the galectin family.</title>
        <authorList>
            <person name="Ogden A.T."/>
            <person name="Nunes I."/>
            <person name="Ko K."/>
            <person name="Wu S."/>
            <person name="Hines C.S."/>
            <person name="Wang A.-F."/>
            <person name="Hegde R.S."/>
            <person name="Lang R.A."/>
        </authorList>
    </citation>
    <scope>NUCLEOTIDE SEQUENCE [MRNA]</scope>
    <scope>LACK OF BETA-GALACTOSIDE-BINDING</scope>
    <scope>SUBUNIT</scope>
    <scope>DOMAIN</scope>
    <scope>TISSUE SPECIFICITY</scope>
    <scope>DEVELOPMENTAL STAGE</scope>
    <source>
        <strain>Sprague-Dawley</strain>
    </source>
</reference>
<reference key="2">
    <citation type="journal article" date="2012" name="Nat. Commun.">
        <title>Quantitative maps of protein phosphorylation sites across 14 different rat organs and tissues.</title>
        <authorList>
            <person name="Lundby A."/>
            <person name="Secher A."/>
            <person name="Lage K."/>
            <person name="Nordsborg N.B."/>
            <person name="Dmytriyev A."/>
            <person name="Lundby C."/>
            <person name="Olsen J.V."/>
        </authorList>
    </citation>
    <scope>PHOSPHORYLATION [LARGE SCALE ANALYSIS] AT SER-138</scope>
    <scope>IDENTIFICATION BY MASS SPECTROMETRY [LARGE SCALE ANALYSIS]</scope>
</reference>
<evidence type="ECO:0000255" key="1">
    <source>
        <dbReference type="PROSITE-ProRule" id="PRU00639"/>
    </source>
</evidence>
<evidence type="ECO:0000269" key="2">
    <source>
    </source>
</evidence>
<evidence type="ECO:0007744" key="3">
    <source>
    </source>
</evidence>
<organism>
    <name type="scientific">Rattus norvegicus</name>
    <name type="common">Rat</name>
    <dbReference type="NCBI Taxonomy" id="10116"/>
    <lineage>
        <taxon>Eukaryota</taxon>
        <taxon>Metazoa</taxon>
        <taxon>Chordata</taxon>
        <taxon>Craniata</taxon>
        <taxon>Vertebrata</taxon>
        <taxon>Euteleostomi</taxon>
        <taxon>Mammalia</taxon>
        <taxon>Eutheria</taxon>
        <taxon>Euarchontoglires</taxon>
        <taxon>Glires</taxon>
        <taxon>Rodentia</taxon>
        <taxon>Myomorpha</taxon>
        <taxon>Muroidea</taxon>
        <taxon>Muridae</taxon>
        <taxon>Murinae</taxon>
        <taxon>Rattus</taxon>
    </lineage>
</organism>
<proteinExistence type="evidence at protein level"/>
<keyword id="KW-0430">Lectin</keyword>
<keyword id="KW-0597">Phosphoprotein</keyword>
<keyword id="KW-1185">Reference proteome</keyword>
<comment type="subunit">
    <text evidence="2">Homodimer.</text>
</comment>
<comment type="tissue specificity">
    <text evidence="2">Lens-specific. Located at the interface between lens fiber cells (at protein level).</text>
</comment>
<comment type="developmental stage">
    <text evidence="2">Increases during lens maturation (at protein level).</text>
</comment>
<comment type="domain">
    <text evidence="2">The galectin domain is atypical and does not bind beta-galactoside sugars.</text>
</comment>
<accession>O88644</accession>